<accession>B1IT10</accession>
<dbReference type="EC" id="4.1.1.85" evidence="1"/>
<dbReference type="EMBL" id="CP000946">
    <property type="protein sequence ID" value="ACA79421.1"/>
    <property type="molecule type" value="Genomic_DNA"/>
</dbReference>
<dbReference type="RefSeq" id="WP_000056760.1">
    <property type="nucleotide sequence ID" value="NZ_MTFT01000012.1"/>
</dbReference>
<dbReference type="SMR" id="B1IT10"/>
<dbReference type="GeneID" id="75202430"/>
<dbReference type="KEGG" id="ecl:EcolC_3817"/>
<dbReference type="HOGENOM" id="CLU_081825_0_0_6"/>
<dbReference type="UniPathway" id="UPA00263">
    <property type="reaction ID" value="UER00378"/>
</dbReference>
<dbReference type="GO" id="GO:0033982">
    <property type="term" value="F:3-dehydro-L-gulonate-6-phosphate decarboxylase activity"/>
    <property type="evidence" value="ECO:0007669"/>
    <property type="project" value="UniProtKB-EC"/>
</dbReference>
<dbReference type="GO" id="GO:0000287">
    <property type="term" value="F:magnesium ion binding"/>
    <property type="evidence" value="ECO:0007669"/>
    <property type="project" value="UniProtKB-UniRule"/>
</dbReference>
<dbReference type="GO" id="GO:0004590">
    <property type="term" value="F:orotidine-5'-phosphate decarboxylase activity"/>
    <property type="evidence" value="ECO:0007669"/>
    <property type="project" value="InterPro"/>
</dbReference>
<dbReference type="GO" id="GO:0006207">
    <property type="term" value="P:'de novo' pyrimidine nucleobase biosynthetic process"/>
    <property type="evidence" value="ECO:0007669"/>
    <property type="project" value="InterPro"/>
</dbReference>
<dbReference type="GO" id="GO:0019854">
    <property type="term" value="P:L-ascorbic acid catabolic process"/>
    <property type="evidence" value="ECO:0007669"/>
    <property type="project" value="UniProtKB-UniRule"/>
</dbReference>
<dbReference type="CDD" id="cd04726">
    <property type="entry name" value="KGPDC_HPS"/>
    <property type="match status" value="1"/>
</dbReference>
<dbReference type="FunFam" id="3.20.20.70:FF:000022">
    <property type="entry name" value="3-keto-L-gulonate-6-phosphate decarboxylase UlaD"/>
    <property type="match status" value="1"/>
</dbReference>
<dbReference type="Gene3D" id="3.20.20.70">
    <property type="entry name" value="Aldolase class I"/>
    <property type="match status" value="1"/>
</dbReference>
<dbReference type="HAMAP" id="MF_01267">
    <property type="entry name" value="UlaD"/>
    <property type="match status" value="1"/>
</dbReference>
<dbReference type="InterPro" id="IPR023942">
    <property type="entry name" value="3-keto-L-gulonate6Pdecase_UlaD"/>
</dbReference>
<dbReference type="InterPro" id="IPR013785">
    <property type="entry name" value="Aldolase_TIM"/>
</dbReference>
<dbReference type="InterPro" id="IPR041710">
    <property type="entry name" value="HPS/KGPDC"/>
</dbReference>
<dbReference type="InterPro" id="IPR001754">
    <property type="entry name" value="OMPdeCOase_dom"/>
</dbReference>
<dbReference type="InterPro" id="IPR011060">
    <property type="entry name" value="RibuloseP-bd_barrel"/>
</dbReference>
<dbReference type="NCBIfam" id="NF009832">
    <property type="entry name" value="PRK13306.1"/>
    <property type="match status" value="1"/>
</dbReference>
<dbReference type="PANTHER" id="PTHR35039">
    <property type="entry name" value="3-KETO-L-GULONATE-6-PHOSPHATE DECARBOXYLASE SGBH-RELATED"/>
    <property type="match status" value="1"/>
</dbReference>
<dbReference type="PANTHER" id="PTHR35039:SF3">
    <property type="entry name" value="3-KETO-L-GULONATE-6-PHOSPHATE DECARBOXYLASE SGBH-RELATED"/>
    <property type="match status" value="1"/>
</dbReference>
<dbReference type="Pfam" id="PF00215">
    <property type="entry name" value="OMPdecase"/>
    <property type="match status" value="1"/>
</dbReference>
<dbReference type="SMART" id="SM00934">
    <property type="entry name" value="OMPdecase"/>
    <property type="match status" value="1"/>
</dbReference>
<dbReference type="SUPFAM" id="SSF51366">
    <property type="entry name" value="Ribulose-phoshate binding barrel"/>
    <property type="match status" value="1"/>
</dbReference>
<keyword id="KW-0119">Carbohydrate metabolism</keyword>
<keyword id="KW-0210">Decarboxylase</keyword>
<keyword id="KW-0456">Lyase</keyword>
<keyword id="KW-0460">Magnesium</keyword>
<keyword id="KW-0479">Metal-binding</keyword>
<gene>
    <name evidence="1" type="primary">ulaD</name>
    <name type="ordered locus">EcolC_3817</name>
</gene>
<proteinExistence type="inferred from homology"/>
<name>ULAD_ECOLC</name>
<comment type="function">
    <text evidence="1">Catalyzes the decarboxylation of 3-keto-L-gulonate-6-P into L-xylulose-5-P. Is involved in the anaerobic L-ascorbate utilization.</text>
</comment>
<comment type="catalytic activity">
    <reaction evidence="1">
        <text>3-dehydro-L-gulonate 6-phosphate + H(+) = L-xylulose 5-phosphate + CO2</text>
        <dbReference type="Rhea" id="RHEA:14353"/>
        <dbReference type="ChEBI" id="CHEBI:15378"/>
        <dbReference type="ChEBI" id="CHEBI:16526"/>
        <dbReference type="ChEBI" id="CHEBI:57829"/>
        <dbReference type="ChEBI" id="CHEBI:58774"/>
        <dbReference type="EC" id="4.1.1.85"/>
    </reaction>
</comment>
<comment type="cofactor">
    <cofactor evidence="1">
        <name>Mg(2+)</name>
        <dbReference type="ChEBI" id="CHEBI:18420"/>
    </cofactor>
    <text evidence="1">Binds 1 Mg(2+) ion per subunit.</text>
</comment>
<comment type="pathway">
    <text evidence="1">Cofactor degradation; L-ascorbate degradation; D-xylulose 5-phosphate from L-ascorbate: step 2/4.</text>
</comment>
<comment type="subunit">
    <text evidence="1">Homodimer.</text>
</comment>
<comment type="induction">
    <text evidence="1">Induced by L-ascorbate. Repressed by UlaR.</text>
</comment>
<comment type="similarity">
    <text evidence="1">Belongs to the HPS/KGPDC family. KGPDC subfamily.</text>
</comment>
<reference key="1">
    <citation type="submission" date="2008-02" db="EMBL/GenBank/DDBJ databases">
        <title>Complete sequence of Escherichia coli C str. ATCC 8739.</title>
        <authorList>
            <person name="Copeland A."/>
            <person name="Lucas S."/>
            <person name="Lapidus A."/>
            <person name="Glavina del Rio T."/>
            <person name="Dalin E."/>
            <person name="Tice H."/>
            <person name="Bruce D."/>
            <person name="Goodwin L."/>
            <person name="Pitluck S."/>
            <person name="Kiss H."/>
            <person name="Brettin T."/>
            <person name="Detter J.C."/>
            <person name="Han C."/>
            <person name="Kuske C.R."/>
            <person name="Schmutz J."/>
            <person name="Larimer F."/>
            <person name="Land M."/>
            <person name="Hauser L."/>
            <person name="Kyrpides N."/>
            <person name="Mikhailova N."/>
            <person name="Ingram L."/>
            <person name="Richardson P."/>
        </authorList>
    </citation>
    <scope>NUCLEOTIDE SEQUENCE [LARGE SCALE GENOMIC DNA]</scope>
    <source>
        <strain>ATCC 8739 / DSM 1576 / NBRC 3972 / NCIMB 8545 / WDCM 00012 / Crooks</strain>
    </source>
</reference>
<feature type="chain" id="PRO_1000085826" description="3-keto-L-gulonate-6-phosphate decarboxylase UlaD">
    <location>
        <begin position="1"/>
        <end position="216"/>
    </location>
</feature>
<feature type="binding site" evidence="1">
    <location>
        <position position="11"/>
    </location>
    <ligand>
        <name>substrate</name>
    </ligand>
</feature>
<feature type="binding site" evidence="1">
    <location>
        <position position="33"/>
    </location>
    <ligand>
        <name>Mg(2+)</name>
        <dbReference type="ChEBI" id="CHEBI:18420"/>
    </ligand>
</feature>
<feature type="binding site" evidence="1">
    <location>
        <position position="62"/>
    </location>
    <ligand>
        <name>Mg(2+)</name>
        <dbReference type="ChEBI" id="CHEBI:18420"/>
    </ligand>
</feature>
<feature type="binding site" evidence="1">
    <location>
        <position position="192"/>
    </location>
    <ligand>
        <name>substrate</name>
    </ligand>
</feature>
<feature type="site" description="Transition state stabilizer" evidence="1">
    <location>
        <position position="64"/>
    </location>
</feature>
<feature type="site" description="Transition state stabilizer" evidence="1">
    <location>
        <position position="67"/>
    </location>
</feature>
<sequence>MSLPMLQVALDNQTMDSAYETTRLIAEEVDIIEVGTILCVGEGVRAVRDLKALYPHKIVLADAKIADAGKILSRMCFEANADWVTVICCADINTAKGALDVAKEFNGDVQIELTGYWTWEQAQQWRDAGIQQVVYHRSRDAQAAGVAWGEADITAIKRLSDMGFKVTVTGGLALEDLPLFKGIPIHVFIAGRSIRDAASPVEAARQFKRSIAELWG</sequence>
<organism>
    <name type="scientific">Escherichia coli (strain ATCC 8739 / DSM 1576 / NBRC 3972 / NCIMB 8545 / WDCM 00012 / Crooks)</name>
    <dbReference type="NCBI Taxonomy" id="481805"/>
    <lineage>
        <taxon>Bacteria</taxon>
        <taxon>Pseudomonadati</taxon>
        <taxon>Pseudomonadota</taxon>
        <taxon>Gammaproteobacteria</taxon>
        <taxon>Enterobacterales</taxon>
        <taxon>Enterobacteriaceae</taxon>
        <taxon>Escherichia</taxon>
    </lineage>
</organism>
<evidence type="ECO:0000255" key="1">
    <source>
        <dbReference type="HAMAP-Rule" id="MF_01267"/>
    </source>
</evidence>
<protein>
    <recommendedName>
        <fullName evidence="1">3-keto-L-gulonate-6-phosphate decarboxylase UlaD</fullName>
        <ecNumber evidence="1">4.1.1.85</ecNumber>
    </recommendedName>
    <alternativeName>
        <fullName evidence="1">3-dehydro-L-gulonate-6-phosphate decarboxylase</fullName>
    </alternativeName>
    <alternativeName>
        <fullName evidence="1">KGPDC</fullName>
    </alternativeName>
    <alternativeName>
        <fullName evidence="1">L-ascorbate utilization protein D</fullName>
    </alternativeName>
</protein>